<reference key="1">
    <citation type="journal article" date="2009" name="BMC Genomics">
        <title>Pseudogene accumulation in the evolutionary histories of Salmonella enterica serovars Paratyphi A and Typhi.</title>
        <authorList>
            <person name="Holt K.E."/>
            <person name="Thomson N.R."/>
            <person name="Wain J."/>
            <person name="Langridge G.C."/>
            <person name="Hasan R."/>
            <person name="Bhutta Z.A."/>
            <person name="Quail M.A."/>
            <person name="Norbertczak H."/>
            <person name="Walker D."/>
            <person name="Simmonds M."/>
            <person name="White B."/>
            <person name="Bason N."/>
            <person name="Mungall K."/>
            <person name="Dougan G."/>
            <person name="Parkhill J."/>
        </authorList>
    </citation>
    <scope>NUCLEOTIDE SEQUENCE [LARGE SCALE GENOMIC DNA]</scope>
    <source>
        <strain>AKU_12601</strain>
    </source>
</reference>
<proteinExistence type="inferred from homology"/>
<evidence type="ECO:0000255" key="1">
    <source>
        <dbReference type="HAMAP-Rule" id="MF_01345"/>
    </source>
</evidence>
<evidence type="ECO:0000305" key="2"/>
<gene>
    <name evidence="1" type="primary">rpsQ</name>
    <name type="ordered locus">SSPA3076</name>
</gene>
<accession>B5BGX7</accession>
<name>RS17_SALPK</name>
<comment type="function">
    <text evidence="1">One of the primary rRNA binding proteins, it binds specifically to the 5'-end of 16S ribosomal RNA.</text>
</comment>
<comment type="subunit">
    <text evidence="1">Part of the 30S ribosomal subunit.</text>
</comment>
<comment type="similarity">
    <text evidence="1">Belongs to the universal ribosomal protein uS17 family.</text>
</comment>
<keyword id="KW-0687">Ribonucleoprotein</keyword>
<keyword id="KW-0689">Ribosomal protein</keyword>
<keyword id="KW-0694">RNA-binding</keyword>
<keyword id="KW-0699">rRNA-binding</keyword>
<sequence length="84" mass="9722">MTDKIRTLQGRVVSDKMEKSIVVAIERFVKHPIYGKFIKRTTKMHVHDENNECGIGDVVEIRECRPLSKTKSWTLVRVVEKAVL</sequence>
<organism>
    <name type="scientific">Salmonella paratyphi A (strain AKU_12601)</name>
    <dbReference type="NCBI Taxonomy" id="554290"/>
    <lineage>
        <taxon>Bacteria</taxon>
        <taxon>Pseudomonadati</taxon>
        <taxon>Pseudomonadota</taxon>
        <taxon>Gammaproteobacteria</taxon>
        <taxon>Enterobacterales</taxon>
        <taxon>Enterobacteriaceae</taxon>
        <taxon>Salmonella</taxon>
    </lineage>
</organism>
<protein>
    <recommendedName>
        <fullName evidence="1">Small ribosomal subunit protein uS17</fullName>
    </recommendedName>
    <alternativeName>
        <fullName evidence="2">30S ribosomal protein S17</fullName>
    </alternativeName>
</protein>
<dbReference type="EMBL" id="FM200053">
    <property type="protein sequence ID" value="CAR61327.1"/>
    <property type="molecule type" value="Genomic_DNA"/>
</dbReference>
<dbReference type="RefSeq" id="WP_000130101.1">
    <property type="nucleotide sequence ID" value="NC_011147.1"/>
</dbReference>
<dbReference type="SMR" id="B5BGX7"/>
<dbReference type="GeneID" id="66757766"/>
<dbReference type="KEGG" id="sek:SSPA3076"/>
<dbReference type="HOGENOM" id="CLU_073626_1_1_6"/>
<dbReference type="Proteomes" id="UP000001869">
    <property type="component" value="Chromosome"/>
</dbReference>
<dbReference type="GO" id="GO:0022627">
    <property type="term" value="C:cytosolic small ribosomal subunit"/>
    <property type="evidence" value="ECO:0007669"/>
    <property type="project" value="TreeGrafter"/>
</dbReference>
<dbReference type="GO" id="GO:0019843">
    <property type="term" value="F:rRNA binding"/>
    <property type="evidence" value="ECO:0007669"/>
    <property type="project" value="UniProtKB-UniRule"/>
</dbReference>
<dbReference type="GO" id="GO:0003735">
    <property type="term" value="F:structural constituent of ribosome"/>
    <property type="evidence" value="ECO:0007669"/>
    <property type="project" value="InterPro"/>
</dbReference>
<dbReference type="GO" id="GO:0006412">
    <property type="term" value="P:translation"/>
    <property type="evidence" value="ECO:0007669"/>
    <property type="project" value="UniProtKB-UniRule"/>
</dbReference>
<dbReference type="CDD" id="cd00364">
    <property type="entry name" value="Ribosomal_uS17"/>
    <property type="match status" value="1"/>
</dbReference>
<dbReference type="FunFam" id="2.40.50.140:FF:000014">
    <property type="entry name" value="30S ribosomal protein S17"/>
    <property type="match status" value="1"/>
</dbReference>
<dbReference type="Gene3D" id="2.40.50.140">
    <property type="entry name" value="Nucleic acid-binding proteins"/>
    <property type="match status" value="1"/>
</dbReference>
<dbReference type="HAMAP" id="MF_01345_B">
    <property type="entry name" value="Ribosomal_uS17_B"/>
    <property type="match status" value="1"/>
</dbReference>
<dbReference type="InterPro" id="IPR012340">
    <property type="entry name" value="NA-bd_OB-fold"/>
</dbReference>
<dbReference type="InterPro" id="IPR000266">
    <property type="entry name" value="Ribosomal_uS17"/>
</dbReference>
<dbReference type="InterPro" id="IPR019984">
    <property type="entry name" value="Ribosomal_uS17_bact/chlr"/>
</dbReference>
<dbReference type="InterPro" id="IPR019979">
    <property type="entry name" value="Ribosomal_uS17_CS"/>
</dbReference>
<dbReference type="NCBIfam" id="NF004123">
    <property type="entry name" value="PRK05610.1"/>
    <property type="match status" value="1"/>
</dbReference>
<dbReference type="NCBIfam" id="TIGR03635">
    <property type="entry name" value="uS17_bact"/>
    <property type="match status" value="1"/>
</dbReference>
<dbReference type="PANTHER" id="PTHR10744">
    <property type="entry name" value="40S RIBOSOMAL PROTEIN S11 FAMILY MEMBER"/>
    <property type="match status" value="1"/>
</dbReference>
<dbReference type="PANTHER" id="PTHR10744:SF1">
    <property type="entry name" value="SMALL RIBOSOMAL SUBUNIT PROTEIN US17M"/>
    <property type="match status" value="1"/>
</dbReference>
<dbReference type="Pfam" id="PF00366">
    <property type="entry name" value="Ribosomal_S17"/>
    <property type="match status" value="1"/>
</dbReference>
<dbReference type="PRINTS" id="PR00973">
    <property type="entry name" value="RIBOSOMALS17"/>
</dbReference>
<dbReference type="SUPFAM" id="SSF50249">
    <property type="entry name" value="Nucleic acid-binding proteins"/>
    <property type="match status" value="1"/>
</dbReference>
<dbReference type="PROSITE" id="PS00056">
    <property type="entry name" value="RIBOSOMAL_S17"/>
    <property type="match status" value="1"/>
</dbReference>
<feature type="chain" id="PRO_1000143300" description="Small ribosomal subunit protein uS17">
    <location>
        <begin position="1"/>
        <end position="84"/>
    </location>
</feature>